<reference key="1">
    <citation type="journal article" date="2000" name="Rapid Commun. Mass Spectrom.">
        <title>Advantages of using nested collision induced dissociation/post-source decay with matrix-assisted laser desorption/ionization time-of-flight mass spectrometry: sequencing of novel peptides from wasp venom.</title>
        <authorList>
            <person name="Hisada M."/>
            <person name="Konno K."/>
            <person name="Itagaki Y."/>
            <person name="Naoki H."/>
            <person name="Nakajima T."/>
        </authorList>
    </citation>
    <scope>PROTEIN SEQUENCE</scope>
    <scope>SYNTHESIS</scope>
    <scope>IDENTIFICATION BY MASS SPECTROMETRY</scope>
    <source>
        <tissue>Venom</tissue>
    </source>
</reference>
<reference key="2">
    <citation type="journal article" date="2006" name="Peptides">
        <title>Eumenitin, a novel antimicrobial peptide from the venom of the solitary eumenine wasp Eumenes rubronotatus.</title>
        <authorList>
            <person name="Konno K."/>
            <person name="Hisada M."/>
            <person name="Naoki H."/>
            <person name="Itagaki Y."/>
            <person name="Fontana R."/>
            <person name="Rangel M."/>
            <person name="Oliveira J.S."/>
            <person name="dos Santos Cabrera M.P."/>
            <person name="Neto J.R."/>
            <person name="Hide I."/>
            <person name="Nakata Y."/>
            <person name="Yasuhara T."/>
            <person name="Nakajima T."/>
        </authorList>
    </citation>
    <scope>PROTEIN SEQUENCE</scope>
    <scope>FUNCTION</scope>
    <scope>SUBCELLULAR LOCATION</scope>
    <scope>MASS SPECTROMETRY</scope>
    <scope>SYNTHESIS</scope>
    <source>
        <tissue>Venom</tissue>
    </source>
</reference>
<reference key="3">
    <citation type="journal article" date="2008" name="Toxicon">
        <title>Effects of the cationic antimicrobial peptide eumenitin from the venom of solitary wasp Eumenes rubronotatus in planar lipid bilayers: surface charge and pore formation activity.</title>
        <authorList>
            <person name="Arcisio-Miranda M."/>
            <person name="dos Santos Cabrera M.P."/>
            <person name="Konno K."/>
            <person name="Rangel M."/>
            <person name="Procopio J."/>
        </authorList>
    </citation>
    <scope>FUNCTION</scope>
    <scope>SUBCELLULAR LOCATION</scope>
    <source>
        <tissue>Venom</tissue>
    </source>
</reference>
<keyword id="KW-0044">Antibiotic</keyword>
<keyword id="KW-0929">Antimicrobial</keyword>
<keyword id="KW-0903">Direct protein sequencing</keyword>
<keyword id="KW-1213">G-protein coupled receptor impairing toxin</keyword>
<keyword id="KW-0391">Immunity</keyword>
<keyword id="KW-0399">Innate immunity</keyword>
<keyword id="KW-0467">Mast cell degranulation</keyword>
<keyword id="KW-0472">Membrane</keyword>
<keyword id="KW-0964">Secreted</keyword>
<keyword id="KW-1052">Target cell membrane</keyword>
<keyword id="KW-1053">Target membrane</keyword>
<keyword id="KW-0800">Toxin</keyword>
<keyword id="KW-0812">Transmembrane</keyword>
<evidence type="ECO:0000250" key="1">
    <source>
        <dbReference type="UniProtKB" id="P01514"/>
    </source>
</evidence>
<evidence type="ECO:0000250" key="2">
    <source>
        <dbReference type="UniProtKB" id="P84914"/>
    </source>
</evidence>
<evidence type="ECO:0000269" key="3">
    <source>
    </source>
</evidence>
<evidence type="ECO:0000269" key="4">
    <source>
    </source>
</evidence>
<evidence type="ECO:0000269" key="5">
    <source>
    </source>
</evidence>
<evidence type="ECO:0000303" key="6">
    <source>
    </source>
</evidence>
<evidence type="ECO:0000303" key="7">
    <source>
    </source>
</evidence>
<evidence type="ECO:0000303" key="8">
    <source>
    </source>
</evidence>
<evidence type="ECO:0000305" key="9"/>
<evidence type="ECO:0000305" key="10">
    <source>
    </source>
</evidence>
<evidence type="ECO:0000305" key="11">
    <source>
    </source>
</evidence>
<dbReference type="TCDB" id="1.C.32.2.2">
    <property type="family name" value="the amphipathic peptide mastoparan (mastoparan) family"/>
</dbReference>
<dbReference type="GO" id="GO:0005576">
    <property type="term" value="C:extracellular region"/>
    <property type="evidence" value="ECO:0007669"/>
    <property type="project" value="UniProtKB-SubCell"/>
</dbReference>
<dbReference type="GO" id="GO:0016020">
    <property type="term" value="C:membrane"/>
    <property type="evidence" value="ECO:0007669"/>
    <property type="project" value="UniProtKB-KW"/>
</dbReference>
<dbReference type="GO" id="GO:0044218">
    <property type="term" value="C:other organism cell membrane"/>
    <property type="evidence" value="ECO:0007669"/>
    <property type="project" value="UniProtKB-KW"/>
</dbReference>
<dbReference type="GO" id="GO:0090729">
    <property type="term" value="F:toxin activity"/>
    <property type="evidence" value="ECO:0007669"/>
    <property type="project" value="UniProtKB-KW"/>
</dbReference>
<dbReference type="GO" id="GO:0042742">
    <property type="term" value="P:defense response to bacterium"/>
    <property type="evidence" value="ECO:0007669"/>
    <property type="project" value="UniProtKB-KW"/>
</dbReference>
<dbReference type="GO" id="GO:0045087">
    <property type="term" value="P:innate immune response"/>
    <property type="evidence" value="ECO:0007669"/>
    <property type="project" value="UniProtKB-KW"/>
</dbReference>
<organism>
    <name type="scientific">Eumenes rubronotatus</name>
    <name type="common">Solitary wasp</name>
    <dbReference type="NCBI Taxonomy" id="539890"/>
    <lineage>
        <taxon>Eukaryota</taxon>
        <taxon>Metazoa</taxon>
        <taxon>Ecdysozoa</taxon>
        <taxon>Arthropoda</taxon>
        <taxon>Hexapoda</taxon>
        <taxon>Insecta</taxon>
        <taxon>Pterygota</taxon>
        <taxon>Neoptera</taxon>
        <taxon>Endopterygota</taxon>
        <taxon>Hymenoptera</taxon>
        <taxon>Apocrita</taxon>
        <taxon>Aculeata</taxon>
        <taxon>Vespoidea</taxon>
        <taxon>Vespidae</taxon>
        <taxon>Eumeninae</taxon>
        <taxon>Eumenes</taxon>
    </lineage>
</organism>
<name>EUME_EUMRU</name>
<comment type="function">
    <text evidence="1 2 4 5 10">Cationic linear alpha-helical antimicrobial peptide (PubMed:16762455, PubMed:18206199). It exhibits inhibitory activity against both Gram-positive and Gram-negative bacteria, and moderately stimulates degranulation from the rat peritoneal mast cells (PubMed:16762455). Its mast cell degranulation activity may be related to the activation of G-protein coupled receptors in mast cells as well as interaction with other proteins located in cell endosomal membranes in the mast cells (By similarity). Binds preferentially to charged lipid membranes as compared with zwitterionic ones (PubMed:18206199). Is able to form pores in artificial membranes, activity that is inhibited by cholesterol (PubMed:16762455, PubMed:18206199). Does not show hemolytic activity (PubMed:16762455). May play a role in preventing infection by microorganisms during prey consumption by their larvae (Probable).</text>
</comment>
<comment type="subcellular location">
    <subcellularLocation>
        <location evidence="4 5">Secreted</location>
    </subcellularLocation>
    <subcellularLocation>
        <location evidence="4 5">Target cell membrane</location>
    </subcellularLocation>
    <text evidence="10 11">Assumes an amphipathic alpha-helical conformation in a lipid environment (Probable). Forms pores in membranes (Probable).</text>
</comment>
<comment type="tissue specificity">
    <text evidence="10 11">Expressed by the venom gland.</text>
</comment>
<comment type="mass spectrometry"/>
<comment type="similarity">
    <text evidence="9">Belongs to the MCD family. Eumenitin subfamily.</text>
</comment>
<sequence>LNLKGIFKKVASLLT</sequence>
<accession>P0C931</accession>
<protein>
    <recommendedName>
        <fullName evidence="7 8">Eumenitin</fullName>
    </recommendedName>
    <alternativeName>
        <fullName evidence="6">Er-12</fullName>
    </alternativeName>
</protein>
<proteinExistence type="evidence at protein level"/>
<feature type="peptide" id="PRO_0000370686" description="Eumenitin" evidence="3 4">
    <location>
        <begin position="1"/>
        <end position="15"/>
    </location>
</feature>